<keyword id="KW-1043">Host membrane</keyword>
<keyword id="KW-0472">Membrane</keyword>
<keyword id="KW-1185">Reference proteome</keyword>
<keyword id="KW-0812">Transmembrane</keyword>
<keyword id="KW-1133">Transmembrane helix</keyword>
<keyword id="KW-0946">Virion</keyword>
<proteinExistence type="predicted"/>
<evidence type="ECO:0000255" key="1"/>
<evidence type="ECO:0000305" key="2"/>
<organism>
    <name type="scientific">Acidianus two-tailed virus</name>
    <name type="common">ATV</name>
    <dbReference type="NCBI Taxonomy" id="315953"/>
    <lineage>
        <taxon>Viruses</taxon>
        <taxon>Viruses incertae sedis</taxon>
        <taxon>Bicaudaviridae</taxon>
        <taxon>Bicaudavirus</taxon>
    </lineage>
</organism>
<sequence length="187" mass="20839">MSTTFDKDQENEQQQQDAQAIWKKILSPGARITKDDVDFAIDNLESAPDVPYEFMYATFSPNAKIYQPTAIAVSGVGGIIGALLALKRALQYGGPKYYVTTEEVIKATDQKSPLYLANYALNRLLKAYPAQVVVIKPDDFDKIKTLLSSGGVYISGLPYETLIPISQLSGFGRIWHYSPIQKKFFVF</sequence>
<dbReference type="EMBL" id="AJ888457">
    <property type="protein sequence ID" value="CAI59858.1"/>
    <property type="molecule type" value="Genomic_DNA"/>
</dbReference>
<dbReference type="RefSeq" id="YP_319863.1">
    <property type="nucleotide sequence ID" value="NC_007409.1"/>
</dbReference>
<dbReference type="GeneID" id="4484233"/>
<dbReference type="KEGG" id="vg:4484233"/>
<dbReference type="OrthoDB" id="24837at10239"/>
<dbReference type="Proteomes" id="UP000002150">
    <property type="component" value="Genome"/>
</dbReference>
<dbReference type="GO" id="GO:0033644">
    <property type="term" value="C:host cell membrane"/>
    <property type="evidence" value="ECO:0007669"/>
    <property type="project" value="UniProtKB-SubCell"/>
</dbReference>
<dbReference type="GO" id="GO:0016020">
    <property type="term" value="C:membrane"/>
    <property type="evidence" value="ECO:0007669"/>
    <property type="project" value="UniProtKB-KW"/>
</dbReference>
<dbReference type="GO" id="GO:0044423">
    <property type="term" value="C:virion component"/>
    <property type="evidence" value="ECO:0007669"/>
    <property type="project" value="UniProtKB-KW"/>
</dbReference>
<organismHost>
    <name type="scientific">Acidianus convivator</name>
    <dbReference type="NCBI Taxonomy" id="269667"/>
</organismHost>
<accession>Q3V4V6</accession>
<comment type="subcellular location">
    <subcellularLocation>
        <location evidence="2">Host membrane</location>
        <topology evidence="2">Single-pass membrane protein</topology>
    </subcellularLocation>
    <subcellularLocation>
        <location>Virion</location>
    </subcellularLocation>
</comment>
<feature type="chain" id="PRO_0000389065" description="Structural protein ORF187">
    <location>
        <begin position="1"/>
        <end position="187"/>
    </location>
</feature>
<feature type="transmembrane region" description="Helical" evidence="1">
    <location>
        <begin position="65"/>
        <end position="85"/>
    </location>
</feature>
<protein>
    <recommendedName>
        <fullName>Structural protein ORF187</fullName>
    </recommendedName>
</protein>
<reference key="1">
    <citation type="journal article" date="2005" name="Nature">
        <title>Virology: independent virus development outside a host.</title>
        <authorList>
            <person name="Haring M."/>
            <person name="Vestergaard G."/>
            <person name="Rachel R."/>
            <person name="Chen L."/>
            <person name="Garrett R.A."/>
            <person name="Prangishvili D."/>
        </authorList>
    </citation>
    <scope>NUCLEOTIDE SEQUENCE [GENOMIC DNA]</scope>
</reference>
<name>Y187_ATV</name>